<comment type="function">
    <text evidence="1 4">Helps membrane protein MHAS_02168/C731_2106 (P55) transport triacylglycerides (TAG) across the inner cell membrane into the periplasm and probably ultimately to the outer membrane (By similarity). Binds TAG in its hydrophobic cavity and transfers it between lipid bilayers (By similarity). TAG probably regulates lipid metabolism and growth regulation and plays a structural role in the outer membrane (By similarity). Also binds mannosides, lipoarabinomannan and lipomannan and various glycolipids in the same cavity (By similarity). The lprG-MHAS_02167/C731_2107 operon complements the vancomycin sensitivity of an M.smegmatis knockout of the same operon (PubMed:37833269).</text>
</comment>
<comment type="subcellular location">
    <subcellularLocation>
        <location evidence="3">Cell inner membrane</location>
        <topology evidence="3">Lipid-anchor</topology>
        <orientation evidence="6">Periplasmic side</orientation>
    </subcellularLocation>
</comment>
<comment type="induction">
    <text evidence="4">Part of the lprG-MHAS_02168/C731_2106 operon (PubMed:37833269).</text>
</comment>
<comment type="domain">
    <text evidence="1">Forms a U-shaped beta-half-barrel with a small hydrophobic cavity able to hold a triacylated lipid or triacylglyceride (By similarity). A flexible lid region may move to accommodate different TAG molecules (By similarity).</text>
</comment>
<comment type="PTM">
    <text evidence="2">Modified by Lgt on Cys-22 with an S-linked diacylglyceral, signal peptide is removed by LspA, Cys-22 is further modifed with a fatty acid on its amino group by Lnt yielding a triacylated protein (By similarity).</text>
</comment>
<comment type="similarity">
    <text evidence="6">Belongs to the LppX/LprAFG lipoprotein family.</text>
</comment>
<dbReference type="EMBL" id="AMRA01000053">
    <property type="protein sequence ID" value="EKF23914.1"/>
    <property type="molecule type" value="Genomic_DNA"/>
</dbReference>
<dbReference type="EMBL" id="LR026975">
    <property type="protein sequence ID" value="VCT90462.1"/>
    <property type="molecule type" value="Genomic_DNA"/>
</dbReference>
<dbReference type="RefSeq" id="WP_005627276.1">
    <property type="nucleotide sequence ID" value="NZ_AMRA01000053.1"/>
</dbReference>
<dbReference type="SMR" id="K5BJY3"/>
<dbReference type="STRING" id="1122247.GCA_000379865_00123"/>
<dbReference type="KEGG" id="mhas:MHAS_02167"/>
<dbReference type="PATRIC" id="fig|1122247.3.peg.2028"/>
<dbReference type="eggNOG" id="ENOG50338Y0">
    <property type="taxonomic scope" value="Bacteria"/>
</dbReference>
<dbReference type="OrthoDB" id="4763237at2"/>
<dbReference type="Proteomes" id="UP000006265">
    <property type="component" value="Unassembled WGS sequence"/>
</dbReference>
<dbReference type="GO" id="GO:0005886">
    <property type="term" value="C:plasma membrane"/>
    <property type="evidence" value="ECO:0007669"/>
    <property type="project" value="UniProtKB-SubCell"/>
</dbReference>
<dbReference type="GO" id="GO:0008289">
    <property type="term" value="F:lipid binding"/>
    <property type="evidence" value="ECO:0007669"/>
    <property type="project" value="UniProtKB-KW"/>
</dbReference>
<dbReference type="GO" id="GO:0006869">
    <property type="term" value="P:lipid transport"/>
    <property type="evidence" value="ECO:0007669"/>
    <property type="project" value="UniProtKB-KW"/>
</dbReference>
<dbReference type="CDD" id="cd16334">
    <property type="entry name" value="LppX-like"/>
    <property type="match status" value="1"/>
</dbReference>
<dbReference type="Gene3D" id="2.50.20.20">
    <property type="match status" value="1"/>
</dbReference>
<dbReference type="InterPro" id="IPR029046">
    <property type="entry name" value="LolA/LolB/LppX"/>
</dbReference>
<dbReference type="InterPro" id="IPR009830">
    <property type="entry name" value="LppX/LprAFG"/>
</dbReference>
<dbReference type="Pfam" id="PF07161">
    <property type="entry name" value="LppX_LprAFG"/>
    <property type="match status" value="1"/>
</dbReference>
<dbReference type="SUPFAM" id="SSF89392">
    <property type="entry name" value="Prokaryotic lipoproteins and lipoprotein localization factors"/>
    <property type="match status" value="1"/>
</dbReference>
<dbReference type="PROSITE" id="PS51257">
    <property type="entry name" value="PROKAR_LIPOPROTEIN"/>
    <property type="match status" value="1"/>
</dbReference>
<accession>K5BJY3</accession>
<proteinExistence type="evidence at transcript level"/>
<gene>
    <name evidence="5" type="primary">lprG</name>
    <name evidence="7" type="ORF">C731_2107</name>
    <name evidence="8" type="ORF">MHAS_02167</name>
</gene>
<organism>
    <name type="scientific">Mycolicibacterium hassiacum (strain DSM 44199 / CIP 105218 / JCM 12690 / 3849)</name>
    <name type="common">Mycobacterium hassiacum</name>
    <dbReference type="NCBI Taxonomy" id="1122247"/>
    <lineage>
        <taxon>Bacteria</taxon>
        <taxon>Bacillati</taxon>
        <taxon>Actinomycetota</taxon>
        <taxon>Actinomycetes</taxon>
        <taxon>Mycobacteriales</taxon>
        <taxon>Mycobacteriaceae</taxon>
        <taxon>Mycolicibacterium</taxon>
    </lineage>
</organism>
<evidence type="ECO:0000250" key="1">
    <source>
        <dbReference type="UniProtKB" id="P9WK45"/>
    </source>
</evidence>
<evidence type="ECO:0000250" key="2">
    <source>
        <dbReference type="UniProtKB" id="P9WK47"/>
    </source>
</evidence>
<evidence type="ECO:0000255" key="3">
    <source>
        <dbReference type="PROSITE-ProRule" id="PRU00303"/>
    </source>
</evidence>
<evidence type="ECO:0000269" key="4">
    <source>
    </source>
</evidence>
<evidence type="ECO:0000303" key="5">
    <source>
    </source>
</evidence>
<evidence type="ECO:0000305" key="6"/>
<evidence type="ECO:0000312" key="7">
    <source>
        <dbReference type="EMBL" id="EKF23914.1"/>
    </source>
</evidence>
<evidence type="ECO:0000312" key="8">
    <source>
        <dbReference type="EMBL" id="VCT90462.1"/>
    </source>
</evidence>
<name>LPRG_MYCHD</name>
<keyword id="KW-0997">Cell inner membrane</keyword>
<keyword id="KW-1003">Cell membrane</keyword>
<keyword id="KW-0445">Lipid transport</keyword>
<keyword id="KW-0446">Lipid-binding</keyword>
<keyword id="KW-0449">Lipoprotein</keyword>
<keyword id="KW-0472">Membrane</keyword>
<keyword id="KW-0564">Palmitate</keyword>
<keyword id="KW-1185">Reference proteome</keyword>
<keyword id="KW-0732">Signal</keyword>
<keyword id="KW-0813">Transport</keyword>
<reference evidence="7" key="1">
    <citation type="journal article" date="2012" name="J. Bacteriol.">
        <title>Genome sequence of Mycobacterium hassiacum DSM 44199, a rare source of heat-stable mycobacterial proteins.</title>
        <authorList>
            <person name="Tiago I."/>
            <person name="Maranha A."/>
            <person name="Mendes V."/>
            <person name="Alarico S."/>
            <person name="Moynihan P.J."/>
            <person name="Clarke A.J."/>
            <person name="Macedo-Ribeiro S."/>
            <person name="Pereira P.J."/>
            <person name="Empadinhas N."/>
        </authorList>
    </citation>
    <scope>NUCLEOTIDE SEQUENCE [LARGE SCALE GENOMIC DNA]</scope>
    <source>
        <strain>DSM 44199 / CIP 105218 / JCM 12690 / 3849</strain>
    </source>
</reference>
<reference evidence="8" key="2">
    <citation type="journal article" date="2019" name="Microbiol. Resour. Announc.">
        <title>Complete genome sequence of Mycolicibacterium hassiacum DSM 44199.</title>
        <authorList>
            <person name="Sanchez M."/>
            <person name="Blesa A."/>
            <person name="Sacristan-Horcajada E."/>
            <person name="Berenguer J."/>
        </authorList>
    </citation>
    <scope>NUCLEOTIDE SEQUENCE [LARGE SCALE GENOMIC DNA]</scope>
    <source>
        <strain>DSM 44199 / CIP 105218 / JCM 12690 / 3849</strain>
    </source>
</reference>
<reference key="3">
    <citation type="journal article" date="2023" name="Nat. Commun.">
        <title>Structural basis for triacylglyceride extraction from mycobacterial inner membrane by MFS transporter Rv1410.</title>
        <authorList>
            <person name="Remm S."/>
            <person name="De Vecchis D."/>
            <person name="Schoppe J."/>
            <person name="Hutter C.A.J."/>
            <person name="Gonda I."/>
            <person name="Hohl M."/>
            <person name="Newstead S."/>
            <person name="Schafer L.V."/>
            <person name="Seeger M.A."/>
        </authorList>
    </citation>
    <scope>FUNCTION</scope>
    <scope>OPERON STRUCTURE</scope>
    <source>
        <strain>DSM 44199 / CIP 105218 / JCM 12690 / 3849</strain>
    </source>
</reference>
<protein>
    <recommendedName>
        <fullName evidence="1 8">Lipoarabinomannan carrier protein LprG</fullName>
    </recommendedName>
    <alternativeName>
        <fullName evidence="5">Lipoprotein LprG</fullName>
    </alternativeName>
</protein>
<feature type="signal peptide" evidence="3">
    <location>
        <begin position="1"/>
        <end position="21"/>
    </location>
</feature>
<feature type="chain" id="PRO_5038286898" description="Lipoarabinomannan carrier protein LprG" evidence="3">
    <location>
        <begin position="22"/>
        <end position="232"/>
    </location>
</feature>
<feature type="lipid moiety-binding region" description="N-palmitoyl cysteine" evidence="3">
    <location>
        <position position="22"/>
    </location>
</feature>
<feature type="lipid moiety-binding region" description="S-diacylglycerol cysteine" evidence="3">
    <location>
        <position position="22"/>
    </location>
</feature>
<sequence length="232" mass="24196">MQTRLTAILAAFLTAVALLAGCSKSEESTATDLPDAATLLQQSAETTRGESSVHLLLRTTGELEELPIHSLEGDLTNTPAVAAEGKTTVTVMGQKVEDMPFVVADGDLYAALFGDAISLIGPAADIYDVGAILDPERGLANVLSNFSDAKSVDREKVNDVETVKITGKVSADAVNRIAPQLAVQDAVGGTAWIADGGDHELVQVQLEPRDGVTVTMTLSDWGKPVTVTKPAA</sequence>